<gene>
    <name evidence="1" type="primary">pdxT</name>
    <name type="ordered locus">SH2489</name>
</gene>
<comment type="function">
    <text evidence="1">Catalyzes the hydrolysis of glutamine to glutamate and ammonia as part of the biosynthesis of pyridoxal 5'-phosphate. The resulting ammonia molecule is channeled to the active site of PdxS.</text>
</comment>
<comment type="catalytic activity">
    <reaction evidence="1">
        <text>aldehydo-D-ribose 5-phosphate + D-glyceraldehyde 3-phosphate + L-glutamine = pyridoxal 5'-phosphate + L-glutamate + phosphate + 3 H2O + H(+)</text>
        <dbReference type="Rhea" id="RHEA:31507"/>
        <dbReference type="ChEBI" id="CHEBI:15377"/>
        <dbReference type="ChEBI" id="CHEBI:15378"/>
        <dbReference type="ChEBI" id="CHEBI:29985"/>
        <dbReference type="ChEBI" id="CHEBI:43474"/>
        <dbReference type="ChEBI" id="CHEBI:58273"/>
        <dbReference type="ChEBI" id="CHEBI:58359"/>
        <dbReference type="ChEBI" id="CHEBI:59776"/>
        <dbReference type="ChEBI" id="CHEBI:597326"/>
        <dbReference type="EC" id="4.3.3.6"/>
    </reaction>
</comment>
<comment type="catalytic activity">
    <reaction evidence="1">
        <text>L-glutamine + H2O = L-glutamate + NH4(+)</text>
        <dbReference type="Rhea" id="RHEA:15889"/>
        <dbReference type="ChEBI" id="CHEBI:15377"/>
        <dbReference type="ChEBI" id="CHEBI:28938"/>
        <dbReference type="ChEBI" id="CHEBI:29985"/>
        <dbReference type="ChEBI" id="CHEBI:58359"/>
        <dbReference type="EC" id="3.5.1.2"/>
    </reaction>
</comment>
<comment type="pathway">
    <text evidence="1">Cofactor biosynthesis; pyridoxal 5'-phosphate biosynthesis.</text>
</comment>
<comment type="subunit">
    <text evidence="1">In the presence of PdxS, forms a dodecamer of heterodimers. Only shows activity in the heterodimer.</text>
</comment>
<comment type="similarity">
    <text evidence="1">Belongs to the glutaminase PdxT/SNO family.</text>
</comment>
<reference key="1">
    <citation type="journal article" date="2005" name="J. Bacteriol.">
        <title>Whole-genome sequencing of Staphylococcus haemolyticus uncovers the extreme plasticity of its genome and the evolution of human-colonizing staphylococcal species.</title>
        <authorList>
            <person name="Takeuchi F."/>
            <person name="Watanabe S."/>
            <person name="Baba T."/>
            <person name="Yuzawa H."/>
            <person name="Ito T."/>
            <person name="Morimoto Y."/>
            <person name="Kuroda M."/>
            <person name="Cui L."/>
            <person name="Takahashi M."/>
            <person name="Ankai A."/>
            <person name="Baba S."/>
            <person name="Fukui S."/>
            <person name="Lee J.C."/>
            <person name="Hiramatsu K."/>
        </authorList>
    </citation>
    <scope>NUCLEOTIDE SEQUENCE [LARGE SCALE GENOMIC DNA]</scope>
    <source>
        <strain>JCSC1435</strain>
    </source>
</reference>
<dbReference type="EC" id="4.3.3.6" evidence="1"/>
<dbReference type="EC" id="3.5.1.2" evidence="1"/>
<dbReference type="EMBL" id="AP006716">
    <property type="protein sequence ID" value="BAE05798.1"/>
    <property type="molecule type" value="Genomic_DNA"/>
</dbReference>
<dbReference type="RefSeq" id="WP_011276741.1">
    <property type="nucleotide sequence ID" value="NC_007168.1"/>
</dbReference>
<dbReference type="SMR" id="Q4L3H9"/>
<dbReference type="KEGG" id="sha:SH2489"/>
<dbReference type="eggNOG" id="COG0311">
    <property type="taxonomic scope" value="Bacteria"/>
</dbReference>
<dbReference type="HOGENOM" id="CLU_069674_2_0_9"/>
<dbReference type="OrthoDB" id="9810320at2"/>
<dbReference type="UniPathway" id="UPA00245"/>
<dbReference type="Proteomes" id="UP000000543">
    <property type="component" value="Chromosome"/>
</dbReference>
<dbReference type="GO" id="GO:0005829">
    <property type="term" value="C:cytosol"/>
    <property type="evidence" value="ECO:0007669"/>
    <property type="project" value="TreeGrafter"/>
</dbReference>
<dbReference type="GO" id="GO:1903600">
    <property type="term" value="C:glutaminase complex"/>
    <property type="evidence" value="ECO:0007669"/>
    <property type="project" value="TreeGrafter"/>
</dbReference>
<dbReference type="GO" id="GO:0004359">
    <property type="term" value="F:glutaminase activity"/>
    <property type="evidence" value="ECO:0007669"/>
    <property type="project" value="UniProtKB-UniRule"/>
</dbReference>
<dbReference type="GO" id="GO:0036381">
    <property type="term" value="F:pyridoxal 5'-phosphate synthase (glutamine hydrolysing) activity"/>
    <property type="evidence" value="ECO:0007669"/>
    <property type="project" value="UniProtKB-UniRule"/>
</dbReference>
<dbReference type="GO" id="GO:0006543">
    <property type="term" value="P:glutamine catabolic process"/>
    <property type="evidence" value="ECO:0007669"/>
    <property type="project" value="UniProtKB-UniRule"/>
</dbReference>
<dbReference type="GO" id="GO:0042823">
    <property type="term" value="P:pyridoxal phosphate biosynthetic process"/>
    <property type="evidence" value="ECO:0007669"/>
    <property type="project" value="UniProtKB-UniRule"/>
</dbReference>
<dbReference type="GO" id="GO:0008614">
    <property type="term" value="P:pyridoxine metabolic process"/>
    <property type="evidence" value="ECO:0007669"/>
    <property type="project" value="TreeGrafter"/>
</dbReference>
<dbReference type="CDD" id="cd01749">
    <property type="entry name" value="GATase1_PB"/>
    <property type="match status" value="1"/>
</dbReference>
<dbReference type="FunFam" id="3.40.50.880:FF:000010">
    <property type="entry name" value="uncharacterized protein LOC100176842 isoform X2"/>
    <property type="match status" value="1"/>
</dbReference>
<dbReference type="Gene3D" id="3.40.50.880">
    <property type="match status" value="1"/>
</dbReference>
<dbReference type="HAMAP" id="MF_01615">
    <property type="entry name" value="PdxT"/>
    <property type="match status" value="1"/>
</dbReference>
<dbReference type="InterPro" id="IPR029062">
    <property type="entry name" value="Class_I_gatase-like"/>
</dbReference>
<dbReference type="InterPro" id="IPR002161">
    <property type="entry name" value="PdxT/SNO"/>
</dbReference>
<dbReference type="InterPro" id="IPR021196">
    <property type="entry name" value="PdxT/SNO_CS"/>
</dbReference>
<dbReference type="NCBIfam" id="TIGR03800">
    <property type="entry name" value="PLP_synth_Pdx2"/>
    <property type="match status" value="1"/>
</dbReference>
<dbReference type="PANTHER" id="PTHR31559">
    <property type="entry name" value="PYRIDOXAL 5'-PHOSPHATE SYNTHASE SUBUNIT SNO"/>
    <property type="match status" value="1"/>
</dbReference>
<dbReference type="PANTHER" id="PTHR31559:SF0">
    <property type="entry name" value="PYRIDOXAL 5'-PHOSPHATE SYNTHASE SUBUNIT SNO1-RELATED"/>
    <property type="match status" value="1"/>
</dbReference>
<dbReference type="Pfam" id="PF01174">
    <property type="entry name" value="SNO"/>
    <property type="match status" value="1"/>
</dbReference>
<dbReference type="PIRSF" id="PIRSF005639">
    <property type="entry name" value="Glut_amidoT_SNO"/>
    <property type="match status" value="1"/>
</dbReference>
<dbReference type="SUPFAM" id="SSF52317">
    <property type="entry name" value="Class I glutamine amidotransferase-like"/>
    <property type="match status" value="1"/>
</dbReference>
<dbReference type="PROSITE" id="PS01236">
    <property type="entry name" value="PDXT_SNO_1"/>
    <property type="match status" value="1"/>
</dbReference>
<dbReference type="PROSITE" id="PS51130">
    <property type="entry name" value="PDXT_SNO_2"/>
    <property type="match status" value="1"/>
</dbReference>
<keyword id="KW-0315">Glutamine amidotransferase</keyword>
<keyword id="KW-0378">Hydrolase</keyword>
<keyword id="KW-0456">Lyase</keyword>
<keyword id="KW-0663">Pyridoxal phosphate</keyword>
<evidence type="ECO:0000255" key="1">
    <source>
        <dbReference type="HAMAP-Rule" id="MF_01615"/>
    </source>
</evidence>
<sequence length="184" mass="20405">MKIGVLALQGAVREHIRHIELSGHEGIAVKKVEQLDEIDGLILPGGESTTLRRLMDLYGFKEKLQQSDLPIFGTCAGLIVLAKDVEGETGYLKKLDITVERNSFGRQVDSFEAELDIKGIAEDIEGVFIRAPHIANVEEGVEILSTVGDKIVAVKQGKYLGVSFHPELTDDYRVTQYFIDHMVK</sequence>
<protein>
    <recommendedName>
        <fullName evidence="1">Pyridoxal 5'-phosphate synthase subunit PdxT</fullName>
        <ecNumber evidence="1">4.3.3.6</ecNumber>
    </recommendedName>
    <alternativeName>
        <fullName evidence="1">Pdx2</fullName>
    </alternativeName>
    <alternativeName>
        <fullName evidence="1">Pyridoxal 5'-phosphate synthase glutaminase subunit</fullName>
        <ecNumber evidence="1">3.5.1.2</ecNumber>
    </alternativeName>
</protein>
<proteinExistence type="inferred from homology"/>
<name>PDXT_STAHJ</name>
<accession>Q4L3H9</accession>
<organism>
    <name type="scientific">Staphylococcus haemolyticus (strain JCSC1435)</name>
    <dbReference type="NCBI Taxonomy" id="279808"/>
    <lineage>
        <taxon>Bacteria</taxon>
        <taxon>Bacillati</taxon>
        <taxon>Bacillota</taxon>
        <taxon>Bacilli</taxon>
        <taxon>Bacillales</taxon>
        <taxon>Staphylococcaceae</taxon>
        <taxon>Staphylococcus</taxon>
    </lineage>
</organism>
<feature type="chain" id="PRO_0000135663" description="Pyridoxal 5'-phosphate synthase subunit PdxT">
    <location>
        <begin position="1"/>
        <end position="184"/>
    </location>
</feature>
<feature type="active site" description="Nucleophile" evidence="1">
    <location>
        <position position="75"/>
    </location>
</feature>
<feature type="active site" description="Charge relay system" evidence="1">
    <location>
        <position position="165"/>
    </location>
</feature>
<feature type="active site" description="Charge relay system" evidence="1">
    <location>
        <position position="167"/>
    </location>
</feature>
<feature type="binding site" evidence="1">
    <location>
        <begin position="46"/>
        <end position="48"/>
    </location>
    <ligand>
        <name>L-glutamine</name>
        <dbReference type="ChEBI" id="CHEBI:58359"/>
    </ligand>
</feature>
<feature type="binding site" evidence="1">
    <location>
        <position position="101"/>
    </location>
    <ligand>
        <name>L-glutamine</name>
        <dbReference type="ChEBI" id="CHEBI:58359"/>
    </ligand>
</feature>
<feature type="binding site" evidence="1">
    <location>
        <begin position="129"/>
        <end position="130"/>
    </location>
    <ligand>
        <name>L-glutamine</name>
        <dbReference type="ChEBI" id="CHEBI:58359"/>
    </ligand>
</feature>